<feature type="chain" id="PRO_1000081060" description="Glutamate 5-kinase">
    <location>
        <begin position="1"/>
        <end position="367"/>
    </location>
</feature>
<feature type="domain" description="PUA" evidence="1">
    <location>
        <begin position="275"/>
        <end position="353"/>
    </location>
</feature>
<feature type="binding site" evidence="1">
    <location>
        <position position="10"/>
    </location>
    <ligand>
        <name>ATP</name>
        <dbReference type="ChEBI" id="CHEBI:30616"/>
    </ligand>
</feature>
<feature type="binding site" evidence="1">
    <location>
        <position position="50"/>
    </location>
    <ligand>
        <name>substrate</name>
    </ligand>
</feature>
<feature type="binding site" evidence="1">
    <location>
        <position position="137"/>
    </location>
    <ligand>
        <name>substrate</name>
    </ligand>
</feature>
<feature type="binding site" evidence="1">
    <location>
        <position position="149"/>
    </location>
    <ligand>
        <name>substrate</name>
    </ligand>
</feature>
<feature type="binding site" evidence="1">
    <location>
        <begin position="169"/>
        <end position="170"/>
    </location>
    <ligand>
        <name>ATP</name>
        <dbReference type="ChEBI" id="CHEBI:30616"/>
    </ligand>
</feature>
<feature type="binding site" evidence="1">
    <location>
        <begin position="211"/>
        <end position="217"/>
    </location>
    <ligand>
        <name>ATP</name>
        <dbReference type="ChEBI" id="CHEBI:30616"/>
    </ligand>
</feature>
<proteinExistence type="inferred from homology"/>
<dbReference type="EC" id="2.7.2.11" evidence="1"/>
<dbReference type="EMBL" id="CP000653">
    <property type="protein sequence ID" value="ABP59454.1"/>
    <property type="molecule type" value="Genomic_DNA"/>
</dbReference>
<dbReference type="RefSeq" id="WP_012016175.1">
    <property type="nucleotide sequence ID" value="NC_009436.1"/>
</dbReference>
<dbReference type="SMR" id="A4W6X4"/>
<dbReference type="STRING" id="399742.Ent638_0768"/>
<dbReference type="KEGG" id="ent:Ent638_0768"/>
<dbReference type="eggNOG" id="COG0263">
    <property type="taxonomic scope" value="Bacteria"/>
</dbReference>
<dbReference type="HOGENOM" id="CLU_025400_2_0_6"/>
<dbReference type="OrthoDB" id="9804434at2"/>
<dbReference type="UniPathway" id="UPA00098">
    <property type="reaction ID" value="UER00359"/>
</dbReference>
<dbReference type="Proteomes" id="UP000000230">
    <property type="component" value="Chromosome"/>
</dbReference>
<dbReference type="GO" id="GO:0005829">
    <property type="term" value="C:cytosol"/>
    <property type="evidence" value="ECO:0007669"/>
    <property type="project" value="TreeGrafter"/>
</dbReference>
<dbReference type="GO" id="GO:0005524">
    <property type="term" value="F:ATP binding"/>
    <property type="evidence" value="ECO:0007669"/>
    <property type="project" value="UniProtKB-KW"/>
</dbReference>
<dbReference type="GO" id="GO:0004349">
    <property type="term" value="F:glutamate 5-kinase activity"/>
    <property type="evidence" value="ECO:0007669"/>
    <property type="project" value="UniProtKB-UniRule"/>
</dbReference>
<dbReference type="GO" id="GO:0003723">
    <property type="term" value="F:RNA binding"/>
    <property type="evidence" value="ECO:0007669"/>
    <property type="project" value="InterPro"/>
</dbReference>
<dbReference type="GO" id="GO:0055129">
    <property type="term" value="P:L-proline biosynthetic process"/>
    <property type="evidence" value="ECO:0007669"/>
    <property type="project" value="UniProtKB-UniRule"/>
</dbReference>
<dbReference type="CDD" id="cd04242">
    <property type="entry name" value="AAK_G5K_ProB"/>
    <property type="match status" value="1"/>
</dbReference>
<dbReference type="CDD" id="cd21157">
    <property type="entry name" value="PUA_G5K"/>
    <property type="match status" value="1"/>
</dbReference>
<dbReference type="FunFam" id="2.30.130.10:FF:000003">
    <property type="entry name" value="Glutamate 5-kinase"/>
    <property type="match status" value="1"/>
</dbReference>
<dbReference type="FunFam" id="3.40.1160.10:FF:000006">
    <property type="entry name" value="Glutamate 5-kinase"/>
    <property type="match status" value="1"/>
</dbReference>
<dbReference type="Gene3D" id="3.40.1160.10">
    <property type="entry name" value="Acetylglutamate kinase-like"/>
    <property type="match status" value="1"/>
</dbReference>
<dbReference type="Gene3D" id="2.30.130.10">
    <property type="entry name" value="PUA domain"/>
    <property type="match status" value="1"/>
</dbReference>
<dbReference type="HAMAP" id="MF_00456">
    <property type="entry name" value="ProB"/>
    <property type="match status" value="1"/>
</dbReference>
<dbReference type="InterPro" id="IPR036393">
    <property type="entry name" value="AceGlu_kinase-like_sf"/>
</dbReference>
<dbReference type="InterPro" id="IPR001048">
    <property type="entry name" value="Asp/Glu/Uridylate_kinase"/>
</dbReference>
<dbReference type="InterPro" id="IPR041739">
    <property type="entry name" value="G5K_ProB"/>
</dbReference>
<dbReference type="InterPro" id="IPR001057">
    <property type="entry name" value="Glu/AcGlu_kinase"/>
</dbReference>
<dbReference type="InterPro" id="IPR011529">
    <property type="entry name" value="Glu_5kinase"/>
</dbReference>
<dbReference type="InterPro" id="IPR005715">
    <property type="entry name" value="Glu_5kinase/COase_Synthase"/>
</dbReference>
<dbReference type="InterPro" id="IPR019797">
    <property type="entry name" value="Glutamate_5-kinase_CS"/>
</dbReference>
<dbReference type="InterPro" id="IPR002478">
    <property type="entry name" value="PUA"/>
</dbReference>
<dbReference type="InterPro" id="IPR015947">
    <property type="entry name" value="PUA-like_sf"/>
</dbReference>
<dbReference type="InterPro" id="IPR036974">
    <property type="entry name" value="PUA_sf"/>
</dbReference>
<dbReference type="NCBIfam" id="TIGR01027">
    <property type="entry name" value="proB"/>
    <property type="match status" value="1"/>
</dbReference>
<dbReference type="PANTHER" id="PTHR43654">
    <property type="entry name" value="GLUTAMATE 5-KINASE"/>
    <property type="match status" value="1"/>
</dbReference>
<dbReference type="PANTHER" id="PTHR43654:SF1">
    <property type="entry name" value="ISOPENTENYL PHOSPHATE KINASE"/>
    <property type="match status" value="1"/>
</dbReference>
<dbReference type="Pfam" id="PF00696">
    <property type="entry name" value="AA_kinase"/>
    <property type="match status" value="1"/>
</dbReference>
<dbReference type="Pfam" id="PF01472">
    <property type="entry name" value="PUA"/>
    <property type="match status" value="1"/>
</dbReference>
<dbReference type="PIRSF" id="PIRSF000729">
    <property type="entry name" value="GK"/>
    <property type="match status" value="1"/>
</dbReference>
<dbReference type="PRINTS" id="PR00474">
    <property type="entry name" value="GLU5KINASE"/>
</dbReference>
<dbReference type="SMART" id="SM00359">
    <property type="entry name" value="PUA"/>
    <property type="match status" value="1"/>
</dbReference>
<dbReference type="SUPFAM" id="SSF53633">
    <property type="entry name" value="Carbamate kinase-like"/>
    <property type="match status" value="1"/>
</dbReference>
<dbReference type="SUPFAM" id="SSF88697">
    <property type="entry name" value="PUA domain-like"/>
    <property type="match status" value="1"/>
</dbReference>
<dbReference type="PROSITE" id="PS00902">
    <property type="entry name" value="GLUTAMATE_5_KINASE"/>
    <property type="match status" value="1"/>
</dbReference>
<dbReference type="PROSITE" id="PS50890">
    <property type="entry name" value="PUA"/>
    <property type="match status" value="1"/>
</dbReference>
<organism>
    <name type="scientific">Enterobacter sp. (strain 638)</name>
    <dbReference type="NCBI Taxonomy" id="399742"/>
    <lineage>
        <taxon>Bacteria</taxon>
        <taxon>Pseudomonadati</taxon>
        <taxon>Pseudomonadota</taxon>
        <taxon>Gammaproteobacteria</taxon>
        <taxon>Enterobacterales</taxon>
        <taxon>Enterobacteriaceae</taxon>
        <taxon>Enterobacter</taxon>
    </lineage>
</organism>
<evidence type="ECO:0000255" key="1">
    <source>
        <dbReference type="HAMAP-Rule" id="MF_00456"/>
    </source>
</evidence>
<protein>
    <recommendedName>
        <fullName evidence="1">Glutamate 5-kinase</fullName>
        <ecNumber evidence="1">2.7.2.11</ecNumber>
    </recommendedName>
    <alternativeName>
        <fullName evidence="1">Gamma-glutamyl kinase</fullName>
        <shortName evidence="1">GK</shortName>
    </alternativeName>
</protein>
<sequence length="367" mass="39066">MSDSQTLVVKLGTSVLTGGSRRLNRAHIVELVRQCAQLHAAGHRIVIVTSGAIAAGREHLGYPELPATIASKQLLAAVGQSRLIQLWEQLFSIYGIHVGQMLLTRADMEDRERFLNARDTLRALLDNNIVPVINENDAVATAEIKVGDNDNLSALAAILAGADKLLLLTDQQGLFTADPRNNPQAELIKDVHGIDDALRAIAGDSVSGLGTGGMGTKLQAADVACRAGIDTIIAAGSRPGVIGDVMEGISVGTLFHAEATPLENRKRWIFGAPPAGEITVDEGATAAILERGSSLLPKGIKSVTGNFSRGEVIRICNLEGRDIAHGVTRYNSDALRRIAGHHSQQIDAILGYEYGPVAVHRDDMIIR</sequence>
<reference key="1">
    <citation type="journal article" date="2010" name="PLoS Genet.">
        <title>Genome sequence of the plant growth promoting endophytic bacterium Enterobacter sp. 638.</title>
        <authorList>
            <person name="Taghavi S."/>
            <person name="van der Lelie D."/>
            <person name="Hoffman A."/>
            <person name="Zhang Y.B."/>
            <person name="Walla M.D."/>
            <person name="Vangronsveld J."/>
            <person name="Newman L."/>
            <person name="Monchy S."/>
        </authorList>
    </citation>
    <scope>NUCLEOTIDE SEQUENCE [LARGE SCALE GENOMIC DNA]</scope>
    <source>
        <strain>638</strain>
    </source>
</reference>
<comment type="function">
    <text evidence="1">Catalyzes the transfer of a phosphate group to glutamate to form L-glutamate 5-phosphate.</text>
</comment>
<comment type="catalytic activity">
    <reaction evidence="1">
        <text>L-glutamate + ATP = L-glutamyl 5-phosphate + ADP</text>
        <dbReference type="Rhea" id="RHEA:14877"/>
        <dbReference type="ChEBI" id="CHEBI:29985"/>
        <dbReference type="ChEBI" id="CHEBI:30616"/>
        <dbReference type="ChEBI" id="CHEBI:58274"/>
        <dbReference type="ChEBI" id="CHEBI:456216"/>
        <dbReference type="EC" id="2.7.2.11"/>
    </reaction>
</comment>
<comment type="pathway">
    <text evidence="1">Amino-acid biosynthesis; L-proline biosynthesis; L-glutamate 5-semialdehyde from L-glutamate: step 1/2.</text>
</comment>
<comment type="subcellular location">
    <subcellularLocation>
        <location evidence="1">Cytoplasm</location>
    </subcellularLocation>
</comment>
<comment type="similarity">
    <text evidence="1">Belongs to the glutamate 5-kinase family.</text>
</comment>
<keyword id="KW-0028">Amino-acid biosynthesis</keyword>
<keyword id="KW-0067">ATP-binding</keyword>
<keyword id="KW-0963">Cytoplasm</keyword>
<keyword id="KW-0418">Kinase</keyword>
<keyword id="KW-0547">Nucleotide-binding</keyword>
<keyword id="KW-0641">Proline biosynthesis</keyword>
<keyword id="KW-0808">Transferase</keyword>
<accession>A4W6X4</accession>
<name>PROB_ENT38</name>
<gene>
    <name evidence="1" type="primary">proB</name>
    <name type="ordered locus">Ent638_0768</name>
</gene>